<reference key="1">
    <citation type="journal article" date="1999" name="Science">
        <title>Genome sequence of the radioresistant bacterium Deinococcus radiodurans R1.</title>
        <authorList>
            <person name="White O."/>
            <person name="Eisen J.A."/>
            <person name="Heidelberg J.F."/>
            <person name="Hickey E.K."/>
            <person name="Peterson J.D."/>
            <person name="Dodson R.J."/>
            <person name="Haft D.H."/>
            <person name="Gwinn M.L."/>
            <person name="Nelson W.C."/>
            <person name="Richardson D.L."/>
            <person name="Moffat K.S."/>
            <person name="Qin H."/>
            <person name="Jiang L."/>
            <person name="Pamphile W."/>
            <person name="Crosby M."/>
            <person name="Shen M."/>
            <person name="Vamathevan J.J."/>
            <person name="Lam P."/>
            <person name="McDonald L.A."/>
            <person name="Utterback T.R."/>
            <person name="Zalewski C."/>
            <person name="Makarova K.S."/>
            <person name="Aravind L."/>
            <person name="Daly M.J."/>
            <person name="Minton K.W."/>
            <person name="Fleischmann R.D."/>
            <person name="Ketchum K.A."/>
            <person name="Nelson K.E."/>
            <person name="Salzberg S.L."/>
            <person name="Smith H.O."/>
            <person name="Venter J.C."/>
            <person name="Fraser C.M."/>
        </authorList>
    </citation>
    <scope>NUCLEOTIDE SEQUENCE [LARGE SCALE GENOMIC DNA]</scope>
    <source>
        <strain>ATCC 13939 / DSM 20539 / JCM 16871 / CCUG 27074 / LMG 4051 / NBRC 15346 / NCIMB 9279 / VKM B-1422 / R1</strain>
    </source>
</reference>
<sequence>MWPFSRQQNVSRILPIVPTAPRRFPVWFPAVLVLVLIALDQWLKAWALAHLQLNAPAIPVIPGVLDWELTFNTGAAWSMFSGSAVPLALGRILVGLGILSYLLWKPQGRFLTVVLSMIAAGAIGNSIDGLQRGQVTDMIHSPLLSAVTEAINGTRFPIFNIADMCVVGGTILLLVASLLPERKREKAVPEA</sequence>
<accession>Q9RRU7</accession>
<protein>
    <recommendedName>
        <fullName evidence="1">Lipoprotein signal peptidase</fullName>
        <ecNumber evidence="1">3.4.23.36</ecNumber>
    </recommendedName>
    <alternativeName>
        <fullName evidence="1">Prolipoprotein signal peptidase</fullName>
    </alternativeName>
    <alternativeName>
        <fullName evidence="1">Signal peptidase II</fullName>
        <shortName evidence="1">SPase II</shortName>
    </alternativeName>
</protein>
<organism>
    <name type="scientific">Deinococcus radiodurans (strain ATCC 13939 / DSM 20539 / JCM 16871 / CCUG 27074 / LMG 4051 / NBRC 15346 / NCIMB 9279 / VKM B-1422 / R1)</name>
    <dbReference type="NCBI Taxonomy" id="243230"/>
    <lineage>
        <taxon>Bacteria</taxon>
        <taxon>Thermotogati</taxon>
        <taxon>Deinococcota</taxon>
        <taxon>Deinococci</taxon>
        <taxon>Deinococcales</taxon>
        <taxon>Deinococcaceae</taxon>
        <taxon>Deinococcus</taxon>
    </lineage>
</organism>
<keyword id="KW-0064">Aspartyl protease</keyword>
<keyword id="KW-1003">Cell membrane</keyword>
<keyword id="KW-0378">Hydrolase</keyword>
<keyword id="KW-0472">Membrane</keyword>
<keyword id="KW-0645">Protease</keyword>
<keyword id="KW-1185">Reference proteome</keyword>
<keyword id="KW-0812">Transmembrane</keyword>
<keyword id="KW-1133">Transmembrane helix</keyword>
<name>LSPA_DEIRA</name>
<comment type="function">
    <text evidence="1">This protein specifically catalyzes the removal of signal peptides from prolipoproteins.</text>
</comment>
<comment type="catalytic activity">
    <reaction evidence="1">
        <text>Release of signal peptides from bacterial membrane prolipoproteins. Hydrolyzes -Xaa-Yaa-Zaa-|-(S,diacylglyceryl)Cys-, in which Xaa is hydrophobic (preferably Leu), and Yaa (Ala or Ser) and Zaa (Gly or Ala) have small, neutral side chains.</text>
        <dbReference type="EC" id="3.4.23.36"/>
    </reaction>
</comment>
<comment type="pathway">
    <text evidence="1">Protein modification; lipoprotein biosynthesis (signal peptide cleavage).</text>
</comment>
<comment type="subcellular location">
    <subcellularLocation>
        <location evidence="1">Cell membrane</location>
        <topology evidence="1">Multi-pass membrane protein</topology>
    </subcellularLocation>
</comment>
<comment type="similarity">
    <text evidence="1">Belongs to the peptidase A8 family.</text>
</comment>
<dbReference type="EC" id="3.4.23.36" evidence="1"/>
<dbReference type="EMBL" id="AE000513">
    <property type="protein sequence ID" value="AAF11933.1"/>
    <property type="molecule type" value="Genomic_DNA"/>
</dbReference>
<dbReference type="PIR" id="E75280">
    <property type="entry name" value="E75280"/>
</dbReference>
<dbReference type="RefSeq" id="NP_296109.1">
    <property type="nucleotide sequence ID" value="NC_001263.1"/>
</dbReference>
<dbReference type="RefSeq" id="WP_010889014.1">
    <property type="nucleotide sequence ID" value="NC_001263.1"/>
</dbReference>
<dbReference type="SMR" id="Q9RRU7"/>
<dbReference type="FunCoup" id="Q9RRU7">
    <property type="interactions" value="351"/>
</dbReference>
<dbReference type="STRING" id="243230.DR_2388"/>
<dbReference type="PaxDb" id="243230-DR_2388"/>
<dbReference type="EnsemblBacteria" id="AAF11933">
    <property type="protein sequence ID" value="AAF11933"/>
    <property type="gene ID" value="DR_2388"/>
</dbReference>
<dbReference type="GeneID" id="69518639"/>
<dbReference type="KEGG" id="dra:DR_2388"/>
<dbReference type="PATRIC" id="fig|243230.17.peg.2624"/>
<dbReference type="eggNOG" id="COG0597">
    <property type="taxonomic scope" value="Bacteria"/>
</dbReference>
<dbReference type="HOGENOM" id="CLU_083252_3_2_0"/>
<dbReference type="InParanoid" id="Q9RRU7"/>
<dbReference type="OrthoDB" id="9810259at2"/>
<dbReference type="UniPathway" id="UPA00665"/>
<dbReference type="Proteomes" id="UP000002524">
    <property type="component" value="Chromosome 1"/>
</dbReference>
<dbReference type="GO" id="GO:0005886">
    <property type="term" value="C:plasma membrane"/>
    <property type="evidence" value="ECO:0000318"/>
    <property type="project" value="GO_Central"/>
</dbReference>
<dbReference type="GO" id="GO:0004190">
    <property type="term" value="F:aspartic-type endopeptidase activity"/>
    <property type="evidence" value="ECO:0007669"/>
    <property type="project" value="UniProtKB-UniRule"/>
</dbReference>
<dbReference type="GO" id="GO:0004175">
    <property type="term" value="F:endopeptidase activity"/>
    <property type="evidence" value="ECO:0000318"/>
    <property type="project" value="GO_Central"/>
</dbReference>
<dbReference type="GO" id="GO:0006508">
    <property type="term" value="P:proteolysis"/>
    <property type="evidence" value="ECO:0007669"/>
    <property type="project" value="UniProtKB-KW"/>
</dbReference>
<dbReference type="HAMAP" id="MF_00161">
    <property type="entry name" value="LspA"/>
    <property type="match status" value="1"/>
</dbReference>
<dbReference type="InterPro" id="IPR001872">
    <property type="entry name" value="Peptidase_A8"/>
</dbReference>
<dbReference type="NCBIfam" id="TIGR00077">
    <property type="entry name" value="lspA"/>
    <property type="match status" value="1"/>
</dbReference>
<dbReference type="NCBIfam" id="NF011359">
    <property type="entry name" value="PRK14777.1"/>
    <property type="match status" value="1"/>
</dbReference>
<dbReference type="PANTHER" id="PTHR33695">
    <property type="entry name" value="LIPOPROTEIN SIGNAL PEPTIDASE"/>
    <property type="match status" value="1"/>
</dbReference>
<dbReference type="PANTHER" id="PTHR33695:SF1">
    <property type="entry name" value="LIPOPROTEIN SIGNAL PEPTIDASE"/>
    <property type="match status" value="1"/>
</dbReference>
<dbReference type="Pfam" id="PF01252">
    <property type="entry name" value="Peptidase_A8"/>
    <property type="match status" value="1"/>
</dbReference>
<dbReference type="PRINTS" id="PR00781">
    <property type="entry name" value="LIPOSIGPTASE"/>
</dbReference>
<gene>
    <name evidence="1" type="primary">lspA</name>
    <name type="ordered locus">DR_2388</name>
</gene>
<feature type="chain" id="PRO_0000289373" description="Lipoprotein signal peptidase">
    <location>
        <begin position="1"/>
        <end position="191"/>
    </location>
</feature>
<feature type="transmembrane region" description="Helical" evidence="1">
    <location>
        <begin position="26"/>
        <end position="46"/>
    </location>
</feature>
<feature type="transmembrane region" description="Helical" evidence="1">
    <location>
        <begin position="84"/>
        <end position="104"/>
    </location>
</feature>
<feature type="transmembrane region" description="Helical" evidence="1">
    <location>
        <begin position="110"/>
        <end position="130"/>
    </location>
</feature>
<feature type="transmembrane region" description="Helical" evidence="1">
    <location>
        <begin position="156"/>
        <end position="176"/>
    </location>
</feature>
<feature type="active site" evidence="1">
    <location>
        <position position="137"/>
    </location>
</feature>
<feature type="active site" evidence="1">
    <location>
        <position position="163"/>
    </location>
</feature>
<evidence type="ECO:0000255" key="1">
    <source>
        <dbReference type="HAMAP-Rule" id="MF_00161"/>
    </source>
</evidence>
<proteinExistence type="inferred from homology"/>